<proteinExistence type="inferred from homology"/>
<sequence length="88" mass="9755">MAASHSLGEKILIKLIRFYQIVISPLIGPRCRFVPTCSCYGLEAIKTHGAVRGAWLTLKRILKCHPLNAGGYDPVPPKSDNHSKENKK</sequence>
<keyword id="KW-0997">Cell inner membrane</keyword>
<keyword id="KW-1003">Cell membrane</keyword>
<keyword id="KW-0472">Membrane</keyword>
<keyword id="KW-1185">Reference proteome</keyword>
<reference key="1">
    <citation type="journal article" date="2010" name="BMC Genomics">
        <title>A genomic perspective on the potential of Actinobacillus succinogenes for industrial succinate production.</title>
        <authorList>
            <person name="McKinlay J.B."/>
            <person name="Laivenieks M."/>
            <person name="Schindler B.D."/>
            <person name="McKinlay A.A."/>
            <person name="Siddaramappa S."/>
            <person name="Challacombe J.F."/>
            <person name="Lowry S.R."/>
            <person name="Clum A."/>
            <person name="Lapidus A.L."/>
            <person name="Burkhart K.B."/>
            <person name="Harkins V."/>
            <person name="Vieille C."/>
        </authorList>
    </citation>
    <scope>NUCLEOTIDE SEQUENCE [LARGE SCALE GENOMIC DNA]</scope>
    <source>
        <strain>ATCC 55618 / DSM 22257 / CCUG 43843 / 130Z</strain>
    </source>
</reference>
<evidence type="ECO:0000255" key="1">
    <source>
        <dbReference type="HAMAP-Rule" id="MF_00386"/>
    </source>
</evidence>
<evidence type="ECO:0000256" key="2">
    <source>
        <dbReference type="SAM" id="MobiDB-lite"/>
    </source>
</evidence>
<feature type="chain" id="PRO_1000072201" description="Putative membrane protein insertion efficiency factor">
    <location>
        <begin position="1"/>
        <end position="88"/>
    </location>
</feature>
<feature type="region of interest" description="Disordered" evidence="2">
    <location>
        <begin position="67"/>
        <end position="88"/>
    </location>
</feature>
<feature type="compositionally biased region" description="Basic and acidic residues" evidence="2">
    <location>
        <begin position="79"/>
        <end position="88"/>
    </location>
</feature>
<gene>
    <name type="ordered locus">Asuc_2115</name>
</gene>
<protein>
    <recommendedName>
        <fullName evidence="1">Putative membrane protein insertion efficiency factor</fullName>
    </recommendedName>
</protein>
<name>YIDD_ACTSZ</name>
<organism>
    <name type="scientific">Actinobacillus succinogenes (strain ATCC 55618 / DSM 22257 / CCUG 43843 / 130Z)</name>
    <dbReference type="NCBI Taxonomy" id="339671"/>
    <lineage>
        <taxon>Bacteria</taxon>
        <taxon>Pseudomonadati</taxon>
        <taxon>Pseudomonadota</taxon>
        <taxon>Gammaproteobacteria</taxon>
        <taxon>Pasteurellales</taxon>
        <taxon>Pasteurellaceae</taxon>
        <taxon>Actinobacillus</taxon>
    </lineage>
</organism>
<accession>A6VR62</accession>
<dbReference type="EMBL" id="CP000746">
    <property type="protein sequence ID" value="ABR75459.1"/>
    <property type="molecule type" value="Genomic_DNA"/>
</dbReference>
<dbReference type="RefSeq" id="WP_012073835.1">
    <property type="nucleotide sequence ID" value="NC_009655.1"/>
</dbReference>
<dbReference type="STRING" id="339671.Asuc_2115"/>
<dbReference type="KEGG" id="asu:Asuc_2115"/>
<dbReference type="eggNOG" id="COG0759">
    <property type="taxonomic scope" value="Bacteria"/>
</dbReference>
<dbReference type="HOGENOM" id="CLU_144811_5_2_6"/>
<dbReference type="OrthoDB" id="9801753at2"/>
<dbReference type="Proteomes" id="UP000001114">
    <property type="component" value="Chromosome"/>
</dbReference>
<dbReference type="GO" id="GO:0005886">
    <property type="term" value="C:plasma membrane"/>
    <property type="evidence" value="ECO:0007669"/>
    <property type="project" value="UniProtKB-SubCell"/>
</dbReference>
<dbReference type="HAMAP" id="MF_00386">
    <property type="entry name" value="UPF0161_YidD"/>
    <property type="match status" value="1"/>
</dbReference>
<dbReference type="InterPro" id="IPR002696">
    <property type="entry name" value="Membr_insert_effic_factor_YidD"/>
</dbReference>
<dbReference type="NCBIfam" id="TIGR00278">
    <property type="entry name" value="membrane protein insertion efficiency factor YidD"/>
    <property type="match status" value="1"/>
</dbReference>
<dbReference type="PANTHER" id="PTHR33383">
    <property type="entry name" value="MEMBRANE PROTEIN INSERTION EFFICIENCY FACTOR-RELATED"/>
    <property type="match status" value="1"/>
</dbReference>
<dbReference type="PANTHER" id="PTHR33383:SF1">
    <property type="entry name" value="MEMBRANE PROTEIN INSERTION EFFICIENCY FACTOR-RELATED"/>
    <property type="match status" value="1"/>
</dbReference>
<dbReference type="Pfam" id="PF01809">
    <property type="entry name" value="YidD"/>
    <property type="match status" value="1"/>
</dbReference>
<dbReference type="SMART" id="SM01234">
    <property type="entry name" value="Haemolytic"/>
    <property type="match status" value="1"/>
</dbReference>
<comment type="function">
    <text evidence="1">Could be involved in insertion of integral membrane proteins into the membrane.</text>
</comment>
<comment type="subcellular location">
    <subcellularLocation>
        <location evidence="1">Cell inner membrane</location>
        <topology evidence="1">Peripheral membrane protein</topology>
        <orientation evidence="1">Cytoplasmic side</orientation>
    </subcellularLocation>
</comment>
<comment type="similarity">
    <text evidence="1">Belongs to the UPF0161 family.</text>
</comment>